<accession>A8Z2R6</accession>
<proteinExistence type="inferred from homology"/>
<organism>
    <name type="scientific">Staphylococcus aureus (strain USA300 / TCH1516)</name>
    <dbReference type="NCBI Taxonomy" id="451516"/>
    <lineage>
        <taxon>Bacteria</taxon>
        <taxon>Bacillati</taxon>
        <taxon>Bacillota</taxon>
        <taxon>Bacilli</taxon>
        <taxon>Bacillales</taxon>
        <taxon>Staphylococcaceae</taxon>
        <taxon>Staphylococcus</taxon>
    </lineage>
</organism>
<sequence>MLTMGTALSQQVDANWQTYIMIAVYFLILIVIGFYGYKQATGNLSEYMLGGRSIGPYITALSAGASDMSGWMIMGLPGSVYSTGLSAMWITIGLTLGAYINYFVVAPRLRVYTELAGDAITLPDFFKNRLNDKNNVLKIISGLIIVVFFTLYTHSGFVSGGKLFESAFGLDYHFGLILVAFIVIFYTFFGGYLAVSITDFFQGVIMLIAMVMVPIVAMMNLNGWGTFHDVAAMKPTNLNLFKGLSFIGIISLFSWGLGYFGQPHIIIRFMSIKSHKMLPKARRLGISWMAVGLLGAVAVGLTGIAFVPAYHIKLEDPETLFIVMSQVLFHPLVGGFLLAAILAAIMSTISSQLLVTSSSLTEDFYKLIRGEEKAKTHQKEFVMIGRLSVLVVAIVAIAIAWNPNDTILNLVGNAWAGFGASFSPLVLFALYWKGLTRAGAVSGMVSGALVVIVWIAWIKPLAHINEIFGLYEIIPGFIVSVIVTYVVSKLTKKPGAFVETDLNKVRDIVREK</sequence>
<comment type="function">
    <text evidence="1 2">Catalyzes the sodium-dependent uptake of extracellular L-proline (By similarity). Since most S.aureus strains are L-proline auxotrophs, this transporter may aid the bacterial persistence during an infection of tissues with low proline concentrations (By similarity).</text>
</comment>
<comment type="catalytic activity">
    <reaction evidence="1">
        <text>L-proline(in) + Na(+)(in) = L-proline(out) + Na(+)(out)</text>
        <dbReference type="Rhea" id="RHEA:28967"/>
        <dbReference type="ChEBI" id="CHEBI:29101"/>
        <dbReference type="ChEBI" id="CHEBI:60039"/>
    </reaction>
</comment>
<comment type="subcellular location">
    <subcellularLocation>
        <location evidence="4">Cell membrane</location>
        <topology evidence="3">Multi-pass membrane protein</topology>
    </subcellularLocation>
</comment>
<comment type="similarity">
    <text evidence="4">Belongs to the sodium:solute symporter (SSF) (TC 2.A.21) family.</text>
</comment>
<evidence type="ECO:0000250" key="1">
    <source>
        <dbReference type="UniProtKB" id="P07117"/>
    </source>
</evidence>
<evidence type="ECO:0000250" key="2">
    <source>
        <dbReference type="UniProtKB" id="Q2FWY7"/>
    </source>
</evidence>
<evidence type="ECO:0000255" key="3"/>
<evidence type="ECO:0000305" key="4"/>
<protein>
    <recommendedName>
        <fullName>Sodium/proline symporter</fullName>
    </recommendedName>
    <alternativeName>
        <fullName>Proline permease</fullName>
    </alternativeName>
</protein>
<feature type="chain" id="PRO_0000364104" description="Sodium/proline symporter">
    <location>
        <begin position="1"/>
        <end position="512"/>
    </location>
</feature>
<feature type="transmembrane region" description="Helical" evidence="3">
    <location>
        <begin position="16"/>
        <end position="36"/>
    </location>
</feature>
<feature type="transmembrane region" description="Helical" evidence="3">
    <location>
        <begin position="54"/>
        <end position="74"/>
    </location>
</feature>
<feature type="transmembrane region" description="Helical" evidence="3">
    <location>
        <begin position="85"/>
        <end position="105"/>
    </location>
</feature>
<feature type="transmembrane region" description="Helical" evidence="3">
    <location>
        <begin position="139"/>
        <end position="159"/>
    </location>
</feature>
<feature type="transmembrane region" description="Helical" evidence="3">
    <location>
        <begin position="174"/>
        <end position="194"/>
    </location>
</feature>
<feature type="transmembrane region" description="Helical" evidence="3">
    <location>
        <begin position="200"/>
        <end position="220"/>
    </location>
</feature>
<feature type="transmembrane region" description="Helical" evidence="3">
    <location>
        <begin position="247"/>
        <end position="267"/>
    </location>
</feature>
<feature type="transmembrane region" description="Helical" evidence="3">
    <location>
        <begin position="286"/>
        <end position="306"/>
    </location>
</feature>
<feature type="transmembrane region" description="Helical" evidence="3">
    <location>
        <begin position="327"/>
        <end position="347"/>
    </location>
</feature>
<feature type="transmembrane region" description="Helical" evidence="3">
    <location>
        <begin position="381"/>
        <end position="401"/>
    </location>
</feature>
<feature type="transmembrane region" description="Helical" evidence="3">
    <location>
        <begin position="410"/>
        <end position="430"/>
    </location>
</feature>
<feature type="transmembrane region" description="Helical" evidence="3">
    <location>
        <begin position="438"/>
        <end position="458"/>
    </location>
</feature>
<feature type="transmembrane region" description="Helical" evidence="3">
    <location>
        <begin position="467"/>
        <end position="487"/>
    </location>
</feature>
<reference key="1">
    <citation type="journal article" date="2007" name="BMC Microbiol.">
        <title>Subtle genetic changes enhance virulence of methicillin resistant and sensitive Staphylococcus aureus.</title>
        <authorList>
            <person name="Highlander S.K."/>
            <person name="Hulten K.G."/>
            <person name="Qin X."/>
            <person name="Jiang H."/>
            <person name="Yerrapragada S."/>
            <person name="Mason E.O. Jr."/>
            <person name="Shang Y."/>
            <person name="Williams T.M."/>
            <person name="Fortunov R.M."/>
            <person name="Liu Y."/>
            <person name="Igboeli O."/>
            <person name="Petrosino J."/>
            <person name="Tirumalai M."/>
            <person name="Uzman A."/>
            <person name="Fox G.E."/>
            <person name="Cardenas A.M."/>
            <person name="Muzny D.M."/>
            <person name="Hemphill L."/>
            <person name="Ding Y."/>
            <person name="Dugan S."/>
            <person name="Blyth P.R."/>
            <person name="Buhay C.J."/>
            <person name="Dinh H.H."/>
            <person name="Hawes A.C."/>
            <person name="Holder M."/>
            <person name="Kovar C.L."/>
            <person name="Lee S.L."/>
            <person name="Liu W."/>
            <person name="Nazareth L.V."/>
            <person name="Wang Q."/>
            <person name="Zhou J."/>
            <person name="Kaplan S.L."/>
            <person name="Weinstock G.M."/>
        </authorList>
    </citation>
    <scope>NUCLEOTIDE SEQUENCE [LARGE SCALE GENOMIC DNA]</scope>
    <source>
        <strain>USA300 / TCH1516</strain>
    </source>
</reference>
<name>PUTP_STAAT</name>
<gene>
    <name type="primary">putP</name>
    <name type="ordered locus">USA300HOU_1903</name>
</gene>
<keyword id="KW-0029">Amino-acid transport</keyword>
<keyword id="KW-1003">Cell membrane</keyword>
<keyword id="KW-0406">Ion transport</keyword>
<keyword id="KW-0472">Membrane</keyword>
<keyword id="KW-0915">Sodium</keyword>
<keyword id="KW-0739">Sodium transport</keyword>
<keyword id="KW-0769">Symport</keyword>
<keyword id="KW-0812">Transmembrane</keyword>
<keyword id="KW-1133">Transmembrane helix</keyword>
<keyword id="KW-0813">Transport</keyword>
<dbReference type="EMBL" id="CP000730">
    <property type="protein sequence ID" value="ABX29905.1"/>
    <property type="molecule type" value="Genomic_DNA"/>
</dbReference>
<dbReference type="RefSeq" id="WP_000957015.1">
    <property type="nucleotide sequence ID" value="NC_010079.1"/>
</dbReference>
<dbReference type="SMR" id="A8Z2R6"/>
<dbReference type="KEGG" id="sax:USA300HOU_1903"/>
<dbReference type="HOGENOM" id="CLU_018808_15_2_9"/>
<dbReference type="GO" id="GO:0005886">
    <property type="term" value="C:plasma membrane"/>
    <property type="evidence" value="ECO:0007669"/>
    <property type="project" value="UniProtKB-SubCell"/>
</dbReference>
<dbReference type="GO" id="GO:0015193">
    <property type="term" value="F:L-proline transmembrane transporter activity"/>
    <property type="evidence" value="ECO:0007669"/>
    <property type="project" value="TreeGrafter"/>
</dbReference>
<dbReference type="GO" id="GO:0005298">
    <property type="term" value="F:proline:sodium symporter activity"/>
    <property type="evidence" value="ECO:0007669"/>
    <property type="project" value="InterPro"/>
</dbReference>
<dbReference type="GO" id="GO:0031402">
    <property type="term" value="F:sodium ion binding"/>
    <property type="evidence" value="ECO:0007669"/>
    <property type="project" value="InterPro"/>
</dbReference>
<dbReference type="GO" id="GO:0015824">
    <property type="term" value="P:proline transport"/>
    <property type="evidence" value="ECO:0007669"/>
    <property type="project" value="InterPro"/>
</dbReference>
<dbReference type="CDD" id="cd11475">
    <property type="entry name" value="SLC5sbd_PutP"/>
    <property type="match status" value="1"/>
</dbReference>
<dbReference type="FunFam" id="1.20.1730.10:FF:000002">
    <property type="entry name" value="Sodium/proline symporter"/>
    <property type="match status" value="1"/>
</dbReference>
<dbReference type="Gene3D" id="1.20.1730.10">
    <property type="entry name" value="Sodium/glucose cotransporter"/>
    <property type="match status" value="1"/>
</dbReference>
<dbReference type="InterPro" id="IPR038377">
    <property type="entry name" value="Na/Glc_symporter_sf"/>
</dbReference>
<dbReference type="InterPro" id="IPR011851">
    <property type="entry name" value="Na/Pro_symporter"/>
</dbReference>
<dbReference type="InterPro" id="IPR001734">
    <property type="entry name" value="Na/solute_symporter"/>
</dbReference>
<dbReference type="InterPro" id="IPR050277">
    <property type="entry name" value="Sodium:Solute_Symporter"/>
</dbReference>
<dbReference type="NCBIfam" id="TIGR02121">
    <property type="entry name" value="Na_Pro_sym"/>
    <property type="match status" value="1"/>
</dbReference>
<dbReference type="NCBIfam" id="TIGR00813">
    <property type="entry name" value="sss"/>
    <property type="match status" value="1"/>
</dbReference>
<dbReference type="PANTHER" id="PTHR48086">
    <property type="entry name" value="SODIUM/PROLINE SYMPORTER-RELATED"/>
    <property type="match status" value="1"/>
</dbReference>
<dbReference type="PANTHER" id="PTHR48086:SF3">
    <property type="entry name" value="SODIUM_PROLINE SYMPORTER"/>
    <property type="match status" value="1"/>
</dbReference>
<dbReference type="Pfam" id="PF00474">
    <property type="entry name" value="SSF"/>
    <property type="match status" value="1"/>
</dbReference>
<dbReference type="PROSITE" id="PS50283">
    <property type="entry name" value="NA_SOLUT_SYMP_3"/>
    <property type="match status" value="1"/>
</dbReference>